<comment type="subunit">
    <text evidence="2">Interacts with cypE.</text>
</comment>
<comment type="interaction">
    <interactant intactId="EBI-1810591">
        <id>P54705</id>
    </interactant>
    <interactant intactId="EBI-1810601">
        <id>Q9NI62</id>
        <label>cypE</label>
    </interactant>
    <organismsDiffer>false</organismsDiffer>
    <experiments>5</experiments>
</comment>
<comment type="subcellular location">
    <subcellularLocation>
        <location>Nucleus</location>
    </subcellularLocation>
</comment>
<comment type="similarity">
    <text evidence="3">Belongs to the SNW family.</text>
</comment>
<evidence type="ECO:0000256" key="1">
    <source>
        <dbReference type="SAM" id="MobiDB-lite"/>
    </source>
</evidence>
<evidence type="ECO:0000269" key="2">
    <source>
    </source>
</evidence>
<evidence type="ECO:0000305" key="3"/>
<gene>
    <name type="primary">snwA</name>
    <name type="ORF">DDB_G0269188</name>
</gene>
<sequence>MTSLSSLLPKPKNVYSNEEEDPLFQPKPKPQQQKQQQQQQQELNDKPKKVIPTYGNRKGYLPKNIEDFGDGGAFPEIHIVQYPLDMGRKGKSKSSNSNTSNMNGGGTTTSIVPVSVDSTGRVKHEAILGEKGSLHSQYKDLIPKQHTEHELQRPDDDELQETLDRTKNALEKIVNGKIKSSKSTNYVEVEKKSATYIKYTPSNQLGSNNGSALNSKIVRMVDVAQDPLEPPKYKIKKKIMEHGSPPAPVMHSPTRKLSVQDQQDWTIPPCVSNWKNPKGFAISIDKRLVSNGGGLQDVEINDKFAHFTQALYIAESNAREEVSARAELERKLAQKEKERKQDMLRKLAEDVRNERSGIIQQRYTRKDNSDSDNDNDNDSSSDEDKNKRTPPMNRRSRSRSTERIPSRNDNDDDDDRYRIKDNRDNRGRDNIDSRDNRDSRDSRDSRDSRDSRDSRDSRDNRDSRDSRDNRDNRDNRRRDDSNDRDRYSKRRSDSDSDSDSDSSDSEDERVRRERKEKLERDKIRMEKKRELEREYRLEASGKKSKFNRDQDRDISEKIALGQASIKRTEDSIYDQRLFNQSESLTSGFGNDDSYNVYSKPLFGGAVSNSIYRPKSNQEDNTSIQDVLSNSRFGKEGGSGSGGVPRPNKEFSGTDRSKDRTGPVAFEKEKKKSDDPFGFDDFSKKR</sequence>
<dbReference type="EMBL" id="U43887">
    <property type="protein sequence ID" value="AAB40497.1"/>
    <property type="molecule type" value="Genomic_DNA"/>
</dbReference>
<dbReference type="EMBL" id="AAFI02000005">
    <property type="protein sequence ID" value="EAL71944.1"/>
    <property type="molecule type" value="Genomic_DNA"/>
</dbReference>
<dbReference type="RefSeq" id="XP_646059.1">
    <property type="nucleotide sequence ID" value="XM_640967.1"/>
</dbReference>
<dbReference type="SMR" id="P54705"/>
<dbReference type="FunCoup" id="P54705">
    <property type="interactions" value="1023"/>
</dbReference>
<dbReference type="IntAct" id="P54705">
    <property type="interactions" value="1"/>
</dbReference>
<dbReference type="STRING" id="44689.P54705"/>
<dbReference type="PaxDb" id="44689-DDB0191206"/>
<dbReference type="EnsemblProtists" id="EAL71944">
    <property type="protein sequence ID" value="EAL71944"/>
    <property type="gene ID" value="DDB_G0269188"/>
</dbReference>
<dbReference type="GeneID" id="8617007"/>
<dbReference type="KEGG" id="ddi:DDB_G0269188"/>
<dbReference type="dictyBase" id="DDB_G0269188">
    <property type="gene designation" value="snwA"/>
</dbReference>
<dbReference type="VEuPathDB" id="AmoebaDB:DDB_G0269188"/>
<dbReference type="eggNOG" id="KOG2441">
    <property type="taxonomic scope" value="Eukaryota"/>
</dbReference>
<dbReference type="HOGENOM" id="CLU_006601_2_0_1"/>
<dbReference type="InParanoid" id="P54705"/>
<dbReference type="OMA" id="YGQRRGW"/>
<dbReference type="PhylomeDB" id="P54705"/>
<dbReference type="Reactome" id="R-DDI-72163">
    <property type="pathway name" value="mRNA Splicing - Major Pathway"/>
</dbReference>
<dbReference type="PRO" id="PR:P54705"/>
<dbReference type="Proteomes" id="UP000002195">
    <property type="component" value="Chromosome 1"/>
</dbReference>
<dbReference type="GO" id="GO:0005681">
    <property type="term" value="C:spliceosomal complex"/>
    <property type="evidence" value="ECO:0007669"/>
    <property type="project" value="InterPro"/>
</dbReference>
<dbReference type="GO" id="GO:0000398">
    <property type="term" value="P:mRNA splicing, via spliceosome"/>
    <property type="evidence" value="ECO:0007669"/>
    <property type="project" value="InterPro"/>
</dbReference>
<dbReference type="InterPro" id="IPR017862">
    <property type="entry name" value="SKI-int_prot_SKIP"/>
</dbReference>
<dbReference type="InterPro" id="IPR004015">
    <property type="entry name" value="SKI-int_prot_SKIP_SNW-dom"/>
</dbReference>
<dbReference type="PANTHER" id="PTHR12096">
    <property type="entry name" value="NUCLEAR PROTEIN SKIP-RELATED"/>
    <property type="match status" value="1"/>
</dbReference>
<dbReference type="Pfam" id="PF02731">
    <property type="entry name" value="SKIP_SNW"/>
    <property type="match status" value="1"/>
</dbReference>
<name>SNWA_DICDI</name>
<proteinExistence type="evidence at protein level"/>
<protein>
    <recommendedName>
        <fullName>Protein snwA</fullName>
    </recommendedName>
</protein>
<organism>
    <name type="scientific">Dictyostelium discoideum</name>
    <name type="common">Social amoeba</name>
    <dbReference type="NCBI Taxonomy" id="44689"/>
    <lineage>
        <taxon>Eukaryota</taxon>
        <taxon>Amoebozoa</taxon>
        <taxon>Evosea</taxon>
        <taxon>Eumycetozoa</taxon>
        <taxon>Dictyostelia</taxon>
        <taxon>Dictyosteliales</taxon>
        <taxon>Dictyosteliaceae</taxon>
        <taxon>Dictyostelium</taxon>
    </lineage>
</organism>
<accession>P54705</accession>
<accession>Q55DS2</accession>
<feature type="chain" id="PRO_0000084826" description="Protein snwA">
    <location>
        <begin position="1"/>
        <end position="685"/>
    </location>
</feature>
<feature type="region of interest" description="Disordered" evidence="1">
    <location>
        <begin position="1"/>
        <end position="62"/>
    </location>
</feature>
<feature type="region of interest" description="Disordered" evidence="1">
    <location>
        <begin position="88"/>
        <end position="112"/>
    </location>
</feature>
<feature type="region of interest" description="SNW">
    <location>
        <begin position="194"/>
        <end position="360"/>
    </location>
</feature>
<feature type="region of interest" description="Disordered" evidence="1">
    <location>
        <begin position="347"/>
        <end position="573"/>
    </location>
</feature>
<feature type="region of interest" description="Disordered" evidence="1">
    <location>
        <begin position="605"/>
        <end position="685"/>
    </location>
</feature>
<feature type="compositionally biased region" description="Low complexity" evidence="1">
    <location>
        <begin position="30"/>
        <end position="41"/>
    </location>
</feature>
<feature type="compositionally biased region" description="Low complexity" evidence="1">
    <location>
        <begin position="93"/>
        <end position="102"/>
    </location>
</feature>
<feature type="compositionally biased region" description="Acidic residues" evidence="1">
    <location>
        <begin position="370"/>
        <end position="381"/>
    </location>
</feature>
<feature type="compositionally biased region" description="Basic and acidic residues" evidence="1">
    <location>
        <begin position="399"/>
        <end position="494"/>
    </location>
</feature>
<feature type="compositionally biased region" description="Acidic residues" evidence="1">
    <location>
        <begin position="495"/>
        <end position="507"/>
    </location>
</feature>
<feature type="compositionally biased region" description="Basic and acidic residues" evidence="1">
    <location>
        <begin position="508"/>
        <end position="556"/>
    </location>
</feature>
<feature type="compositionally biased region" description="Polar residues" evidence="1">
    <location>
        <begin position="618"/>
        <end position="631"/>
    </location>
</feature>
<feature type="compositionally biased region" description="Basic and acidic residues" evidence="1">
    <location>
        <begin position="646"/>
        <end position="685"/>
    </location>
</feature>
<reference key="1">
    <citation type="journal article" date="1996" name="Gene">
        <title>The homolog of chromatin binding protein Bx42 identified in Dictyostelium.</title>
        <authorList>
            <person name="Folk P."/>
            <person name="Puta F."/>
            <person name="Krpejsova L."/>
            <person name="Blahuskova A."/>
            <person name="Markos A."/>
            <person name="Rabino M."/>
            <person name="Dottin R.P."/>
        </authorList>
    </citation>
    <scope>NUCLEOTIDE SEQUENCE [GENOMIC DNA]</scope>
</reference>
<reference key="2">
    <citation type="journal article" date="2005" name="Nature">
        <title>The genome of the social amoeba Dictyostelium discoideum.</title>
        <authorList>
            <person name="Eichinger L."/>
            <person name="Pachebat J.A."/>
            <person name="Gloeckner G."/>
            <person name="Rajandream M.A."/>
            <person name="Sucgang R."/>
            <person name="Berriman M."/>
            <person name="Song J."/>
            <person name="Olsen R."/>
            <person name="Szafranski K."/>
            <person name="Xu Q."/>
            <person name="Tunggal B."/>
            <person name="Kummerfeld S."/>
            <person name="Madera M."/>
            <person name="Konfortov B.A."/>
            <person name="Rivero F."/>
            <person name="Bankier A.T."/>
            <person name="Lehmann R."/>
            <person name="Hamlin N."/>
            <person name="Davies R."/>
            <person name="Gaudet P."/>
            <person name="Fey P."/>
            <person name="Pilcher K."/>
            <person name="Chen G."/>
            <person name="Saunders D."/>
            <person name="Sodergren E.J."/>
            <person name="Davis P."/>
            <person name="Kerhornou A."/>
            <person name="Nie X."/>
            <person name="Hall N."/>
            <person name="Anjard C."/>
            <person name="Hemphill L."/>
            <person name="Bason N."/>
            <person name="Farbrother P."/>
            <person name="Desany B."/>
            <person name="Just E."/>
            <person name="Morio T."/>
            <person name="Rost R."/>
            <person name="Churcher C.M."/>
            <person name="Cooper J."/>
            <person name="Haydock S."/>
            <person name="van Driessche N."/>
            <person name="Cronin A."/>
            <person name="Goodhead I."/>
            <person name="Muzny D.M."/>
            <person name="Mourier T."/>
            <person name="Pain A."/>
            <person name="Lu M."/>
            <person name="Harper D."/>
            <person name="Lindsay R."/>
            <person name="Hauser H."/>
            <person name="James K.D."/>
            <person name="Quiles M."/>
            <person name="Madan Babu M."/>
            <person name="Saito T."/>
            <person name="Buchrieser C."/>
            <person name="Wardroper A."/>
            <person name="Felder M."/>
            <person name="Thangavelu M."/>
            <person name="Johnson D."/>
            <person name="Knights A."/>
            <person name="Loulseged H."/>
            <person name="Mungall K.L."/>
            <person name="Oliver K."/>
            <person name="Price C."/>
            <person name="Quail M.A."/>
            <person name="Urushihara H."/>
            <person name="Hernandez J."/>
            <person name="Rabbinowitsch E."/>
            <person name="Steffen D."/>
            <person name="Sanders M."/>
            <person name="Ma J."/>
            <person name="Kohara Y."/>
            <person name="Sharp S."/>
            <person name="Simmonds M.N."/>
            <person name="Spiegler S."/>
            <person name="Tivey A."/>
            <person name="Sugano S."/>
            <person name="White B."/>
            <person name="Walker D."/>
            <person name="Woodward J.R."/>
            <person name="Winckler T."/>
            <person name="Tanaka Y."/>
            <person name="Shaulsky G."/>
            <person name="Schleicher M."/>
            <person name="Weinstock G.M."/>
            <person name="Rosenthal A."/>
            <person name="Cox E.C."/>
            <person name="Chisholm R.L."/>
            <person name="Gibbs R.A."/>
            <person name="Loomis W.F."/>
            <person name="Platzer M."/>
            <person name="Kay R.R."/>
            <person name="Williams J.G."/>
            <person name="Dear P.H."/>
            <person name="Noegel A.A."/>
            <person name="Barrell B.G."/>
            <person name="Kuspa A."/>
        </authorList>
    </citation>
    <scope>NUCLEOTIDE SEQUENCE [LARGE SCALE GENOMIC DNA]</scope>
    <source>
        <strain>AX4</strain>
    </source>
</reference>
<reference key="3">
    <citation type="journal article" date="2001" name="Biochim. Biophys. Acta">
        <title>Cyclophilins of a novel subfamily interact with SNW/SKIP coregulator in Dictyostelium discoideum and Schizosaccharomyces pombe.</title>
        <authorList>
            <person name="Skruzny M."/>
            <person name="Ambrozkova M."/>
            <person name="Fukova I."/>
            <person name="Martinkova K."/>
            <person name="Blahuskova A."/>
            <person name="Hamplova L."/>
            <person name="Puta F."/>
            <person name="Folk P."/>
        </authorList>
    </citation>
    <scope>INTERACTION WITH CYPE</scope>
    <source>
        <strain>AX3</strain>
    </source>
</reference>
<keyword id="KW-0539">Nucleus</keyword>
<keyword id="KW-1185">Reference proteome</keyword>